<evidence type="ECO:0000255" key="1">
    <source>
        <dbReference type="HAMAP-Rule" id="MF_00311"/>
    </source>
</evidence>
<protein>
    <recommendedName>
        <fullName evidence="1">A-type ATP synthase subunit E</fullName>
    </recommendedName>
</protein>
<accession>A1RYD4</accession>
<comment type="function">
    <text evidence="1">Component of the A-type ATP synthase that produces ATP from ADP in the presence of a proton gradient across the membrane.</text>
</comment>
<comment type="subunit">
    <text evidence="1">Has multiple subunits with at least A(3), B(3), C, D, E, F, H, I and proteolipid K(x).</text>
</comment>
<comment type="subcellular location">
    <subcellularLocation>
        <location evidence="1">Cell membrane</location>
        <topology evidence="1">Peripheral membrane protein</topology>
    </subcellularLocation>
</comment>
<comment type="similarity">
    <text evidence="1">Belongs to the V-ATPase E subunit family.</text>
</comment>
<organism>
    <name type="scientific">Thermofilum pendens (strain DSM 2475 / Hrk 5)</name>
    <dbReference type="NCBI Taxonomy" id="368408"/>
    <lineage>
        <taxon>Archaea</taxon>
        <taxon>Thermoproteota</taxon>
        <taxon>Thermoprotei</taxon>
        <taxon>Thermofilales</taxon>
        <taxon>Thermofilaceae</taxon>
        <taxon>Thermofilum</taxon>
    </lineage>
</organism>
<reference key="1">
    <citation type="journal article" date="2008" name="J. Bacteriol.">
        <title>Genome sequence of Thermofilum pendens reveals an exceptional loss of biosynthetic pathways without genome reduction.</title>
        <authorList>
            <person name="Anderson I."/>
            <person name="Rodriguez J."/>
            <person name="Susanti D."/>
            <person name="Porat I."/>
            <person name="Reich C."/>
            <person name="Ulrich L.E."/>
            <person name="Elkins J.G."/>
            <person name="Mavromatis K."/>
            <person name="Lykidis A."/>
            <person name="Kim E."/>
            <person name="Thompson L.S."/>
            <person name="Nolan M."/>
            <person name="Land M."/>
            <person name="Copeland A."/>
            <person name="Lapidus A."/>
            <person name="Lucas S."/>
            <person name="Detter C."/>
            <person name="Zhulin I.B."/>
            <person name="Olsen G.J."/>
            <person name="Whitman W."/>
            <person name="Mukhopadhyay B."/>
            <person name="Bristow J."/>
            <person name="Kyrpides N."/>
        </authorList>
    </citation>
    <scope>NUCLEOTIDE SEQUENCE [LARGE SCALE GENOMIC DNA]</scope>
    <source>
        <strain>DSM 2475 / Hrk 5</strain>
    </source>
</reference>
<dbReference type="EMBL" id="CP000505">
    <property type="protein sequence ID" value="ABL78214.1"/>
    <property type="molecule type" value="Genomic_DNA"/>
</dbReference>
<dbReference type="SMR" id="A1RYD4"/>
<dbReference type="STRING" id="368408.Tpen_0813"/>
<dbReference type="EnsemblBacteria" id="ABL78214">
    <property type="protein sequence ID" value="ABL78214"/>
    <property type="gene ID" value="Tpen_0813"/>
</dbReference>
<dbReference type="KEGG" id="tpe:Tpen_0813"/>
<dbReference type="eggNOG" id="arCOG00869">
    <property type="taxonomic scope" value="Archaea"/>
</dbReference>
<dbReference type="HOGENOM" id="CLU_1307877_0_0_2"/>
<dbReference type="Proteomes" id="UP000000641">
    <property type="component" value="Chromosome"/>
</dbReference>
<dbReference type="GO" id="GO:0005886">
    <property type="term" value="C:plasma membrane"/>
    <property type="evidence" value="ECO:0007669"/>
    <property type="project" value="UniProtKB-SubCell"/>
</dbReference>
<dbReference type="GO" id="GO:0033178">
    <property type="term" value="C:proton-transporting two-sector ATPase complex, catalytic domain"/>
    <property type="evidence" value="ECO:0007669"/>
    <property type="project" value="InterPro"/>
</dbReference>
<dbReference type="GO" id="GO:0005524">
    <property type="term" value="F:ATP binding"/>
    <property type="evidence" value="ECO:0007669"/>
    <property type="project" value="UniProtKB-UniRule"/>
</dbReference>
<dbReference type="GO" id="GO:0046933">
    <property type="term" value="F:proton-transporting ATP synthase activity, rotational mechanism"/>
    <property type="evidence" value="ECO:0007669"/>
    <property type="project" value="UniProtKB-UniRule"/>
</dbReference>
<dbReference type="GO" id="GO:0046961">
    <property type="term" value="F:proton-transporting ATPase activity, rotational mechanism"/>
    <property type="evidence" value="ECO:0007669"/>
    <property type="project" value="InterPro"/>
</dbReference>
<dbReference type="GO" id="GO:0042777">
    <property type="term" value="P:proton motive force-driven plasma membrane ATP synthesis"/>
    <property type="evidence" value="ECO:0007669"/>
    <property type="project" value="UniProtKB-UniRule"/>
</dbReference>
<dbReference type="Gene3D" id="3.30.2320.30">
    <property type="entry name" value="ATP synthase, E subunit, C-terminal"/>
    <property type="match status" value="1"/>
</dbReference>
<dbReference type="HAMAP" id="MF_00311">
    <property type="entry name" value="ATP_synth_E_arch"/>
    <property type="match status" value="1"/>
</dbReference>
<dbReference type="InterPro" id="IPR038495">
    <property type="entry name" value="ATPase_E_C"/>
</dbReference>
<dbReference type="InterPro" id="IPR002842">
    <property type="entry name" value="ATPase_V1_Esu"/>
</dbReference>
<dbReference type="Pfam" id="PF01991">
    <property type="entry name" value="vATP-synt_E"/>
    <property type="match status" value="1"/>
</dbReference>
<dbReference type="SUPFAM" id="SSF160527">
    <property type="entry name" value="V-type ATPase subunit E-like"/>
    <property type="match status" value="1"/>
</dbReference>
<gene>
    <name evidence="1" type="primary">atpE</name>
    <name type="ordered locus">Tpen_0813</name>
</gene>
<keyword id="KW-0066">ATP synthesis</keyword>
<keyword id="KW-1003">Cell membrane</keyword>
<keyword id="KW-0375">Hydrogen ion transport</keyword>
<keyword id="KW-0406">Ion transport</keyword>
<keyword id="KW-0472">Membrane</keyword>
<keyword id="KW-1185">Reference proteome</keyword>
<keyword id="KW-0813">Transport</keyword>
<sequence length="215" mass="24019">MRGVAEEKTLLEVIIQELRRAAEEESRRIVKEAEQEAQKIVEEAIQKAEAIKAEKLNQLLNEYRQKAMAELAPKRLELRHRAIREKHELIESALNRAIEEAVKTILGNDDYRRTFLEKSLEKGVVALSSTDLVVHPCRGSASIVGQVVEAVAARLSKVKPGLRLEIGDPLGCTEGVVIVSRDGREIYNATLEAKIAEVRESVKPKVLELVSRARA</sequence>
<name>AATE_THEPD</name>
<proteinExistence type="inferred from homology"/>
<feature type="chain" id="PRO_0000322537" description="A-type ATP synthase subunit E">
    <location>
        <begin position="1"/>
        <end position="215"/>
    </location>
</feature>